<organism>
    <name type="scientific">Corynebacterium efficiens (strain DSM 44549 / YS-314 / AJ 12310 / JCM 11189 / NBRC 100395)</name>
    <dbReference type="NCBI Taxonomy" id="196164"/>
    <lineage>
        <taxon>Bacteria</taxon>
        <taxon>Bacillati</taxon>
        <taxon>Actinomycetota</taxon>
        <taxon>Actinomycetes</taxon>
        <taxon>Mycobacteriales</taxon>
        <taxon>Corynebacteriaceae</taxon>
        <taxon>Corynebacterium</taxon>
    </lineage>
</organism>
<evidence type="ECO:0000255" key="1">
    <source>
        <dbReference type="HAMAP-Rule" id="MF_01405"/>
    </source>
</evidence>
<evidence type="ECO:0000305" key="2"/>
<protein>
    <recommendedName>
        <fullName evidence="1">dITP/XTP pyrophosphatase</fullName>
        <ecNumber evidence="1">3.6.1.66</ecNumber>
    </recommendedName>
    <alternativeName>
        <fullName evidence="1">Non-canonical purine NTP pyrophosphatase</fullName>
    </alternativeName>
    <alternativeName>
        <fullName evidence="1">Non-standard purine NTP pyrophosphatase</fullName>
    </alternativeName>
    <alternativeName>
        <fullName evidence="1">Nucleoside-triphosphate diphosphatase</fullName>
    </alternativeName>
    <alternativeName>
        <fullName evidence="1">Nucleoside-triphosphate pyrophosphatase</fullName>
        <shortName evidence="1">NTPase</shortName>
    </alternativeName>
</protein>
<comment type="function">
    <text evidence="1">Pyrophosphatase that catalyzes the hydrolysis of nucleoside triphosphates to their monophosphate derivatives, with a high preference for the non-canonical purine nucleotides XTP (xanthosine triphosphate), dITP (deoxyinosine triphosphate) and ITP. Seems to function as a house-cleaning enzyme that removes non-canonical purine nucleotides from the nucleotide pool, thus preventing their incorporation into DNA/RNA and avoiding chromosomal lesions.</text>
</comment>
<comment type="catalytic activity">
    <reaction evidence="1">
        <text>XTP + H2O = XMP + diphosphate + H(+)</text>
        <dbReference type="Rhea" id="RHEA:28610"/>
        <dbReference type="ChEBI" id="CHEBI:15377"/>
        <dbReference type="ChEBI" id="CHEBI:15378"/>
        <dbReference type="ChEBI" id="CHEBI:33019"/>
        <dbReference type="ChEBI" id="CHEBI:57464"/>
        <dbReference type="ChEBI" id="CHEBI:61314"/>
        <dbReference type="EC" id="3.6.1.66"/>
    </reaction>
</comment>
<comment type="catalytic activity">
    <reaction evidence="1">
        <text>dITP + H2O = dIMP + diphosphate + H(+)</text>
        <dbReference type="Rhea" id="RHEA:28342"/>
        <dbReference type="ChEBI" id="CHEBI:15377"/>
        <dbReference type="ChEBI" id="CHEBI:15378"/>
        <dbReference type="ChEBI" id="CHEBI:33019"/>
        <dbReference type="ChEBI" id="CHEBI:61194"/>
        <dbReference type="ChEBI" id="CHEBI:61382"/>
        <dbReference type="EC" id="3.6.1.66"/>
    </reaction>
</comment>
<comment type="catalytic activity">
    <reaction evidence="1">
        <text>ITP + H2O = IMP + diphosphate + H(+)</text>
        <dbReference type="Rhea" id="RHEA:29399"/>
        <dbReference type="ChEBI" id="CHEBI:15377"/>
        <dbReference type="ChEBI" id="CHEBI:15378"/>
        <dbReference type="ChEBI" id="CHEBI:33019"/>
        <dbReference type="ChEBI" id="CHEBI:58053"/>
        <dbReference type="ChEBI" id="CHEBI:61402"/>
        <dbReference type="EC" id="3.6.1.66"/>
    </reaction>
</comment>
<comment type="cofactor">
    <cofactor evidence="1">
        <name>Mg(2+)</name>
        <dbReference type="ChEBI" id="CHEBI:18420"/>
    </cofactor>
    <text evidence="1">Binds 1 Mg(2+) ion per subunit.</text>
</comment>
<comment type="subunit">
    <text evidence="1">Homodimer.</text>
</comment>
<comment type="similarity">
    <text evidence="1">Belongs to the HAM1 NTPase family.</text>
</comment>
<comment type="sequence caution" evidence="2">
    <conflict type="erroneous initiation">
        <sequence resource="EMBL-CDS" id="BAC19210"/>
    </conflict>
    <text>Extended N-terminus.</text>
</comment>
<name>IXTPA_COREF</name>
<accession>Q8FMU9</accession>
<reference key="1">
    <citation type="journal article" date="2003" name="Genome Res.">
        <title>Comparative complete genome sequence analysis of the amino acid replacements responsible for the thermostability of Corynebacterium efficiens.</title>
        <authorList>
            <person name="Nishio Y."/>
            <person name="Nakamura Y."/>
            <person name="Kawarabayasi Y."/>
            <person name="Usuda Y."/>
            <person name="Kimura E."/>
            <person name="Sugimoto S."/>
            <person name="Matsui K."/>
            <person name="Yamagishi A."/>
            <person name="Kikuchi H."/>
            <person name="Ikeo K."/>
            <person name="Gojobori T."/>
        </authorList>
    </citation>
    <scope>NUCLEOTIDE SEQUENCE [LARGE SCALE GENOMIC DNA]</scope>
    <source>
        <strain>DSM 44549 / YS-314 / AJ 12310 / JCM 11189 / NBRC 100395</strain>
    </source>
</reference>
<keyword id="KW-0378">Hydrolase</keyword>
<keyword id="KW-0460">Magnesium</keyword>
<keyword id="KW-0479">Metal-binding</keyword>
<keyword id="KW-0546">Nucleotide metabolism</keyword>
<keyword id="KW-0547">Nucleotide-binding</keyword>
<keyword id="KW-1185">Reference proteome</keyword>
<feature type="chain" id="PRO_0000178158" description="dITP/XTP pyrophosphatase">
    <location>
        <begin position="1"/>
        <end position="207"/>
    </location>
</feature>
<feature type="active site" description="Proton acceptor" evidence="1">
    <location>
        <position position="72"/>
    </location>
</feature>
<feature type="binding site" evidence="1">
    <location>
        <begin position="7"/>
        <end position="12"/>
    </location>
    <ligand>
        <name>substrate</name>
    </ligand>
</feature>
<feature type="binding site" evidence="1">
    <location>
        <position position="72"/>
    </location>
    <ligand>
        <name>Mg(2+)</name>
        <dbReference type="ChEBI" id="CHEBI:18420"/>
    </ligand>
</feature>
<feature type="binding site" evidence="1">
    <location>
        <position position="73"/>
    </location>
    <ligand>
        <name>substrate</name>
    </ligand>
</feature>
<feature type="binding site" evidence="1">
    <location>
        <begin position="155"/>
        <end position="158"/>
    </location>
    <ligand>
        <name>substrate</name>
    </ligand>
</feature>
<feature type="binding site" evidence="1">
    <location>
        <position position="184"/>
    </location>
    <ligand>
        <name>substrate</name>
    </ligand>
</feature>
<feature type="binding site" evidence="1">
    <location>
        <begin position="189"/>
        <end position="190"/>
    </location>
    <ligand>
        <name>substrate</name>
    </ligand>
</feature>
<gene>
    <name type="ordered locus">CE2400</name>
</gene>
<sequence length="207" mass="22088">MKLLVASNNAKKLGELQRILDQAGIENVELLALADVPSYPEPVEDGRTFTENALIKARAGASNTGLITLADDSGLEVDALNGMPGVLSARWAGKHGNDQANNDLLLAQIADIPEEHRGAAFVSVCAIVTPDGREFVEEGRWHGTLLREPVGTNGFGYDPLFVPMEESLIEGRDRSSAQLTAQEKDALSHRGKALRALVPAIAELAGQ</sequence>
<dbReference type="EC" id="3.6.1.66" evidence="1"/>
<dbReference type="EMBL" id="BA000035">
    <property type="protein sequence ID" value="BAC19210.1"/>
    <property type="status" value="ALT_INIT"/>
    <property type="molecule type" value="Genomic_DNA"/>
</dbReference>
<dbReference type="RefSeq" id="WP_006768407.1">
    <property type="nucleotide sequence ID" value="NC_004369.1"/>
</dbReference>
<dbReference type="SMR" id="Q8FMU9"/>
<dbReference type="STRING" id="196164.gene:10742838"/>
<dbReference type="KEGG" id="cef:CE2400"/>
<dbReference type="eggNOG" id="COG0127">
    <property type="taxonomic scope" value="Bacteria"/>
</dbReference>
<dbReference type="HOGENOM" id="CLU_082080_0_1_11"/>
<dbReference type="OrthoDB" id="9807456at2"/>
<dbReference type="Proteomes" id="UP000001409">
    <property type="component" value="Chromosome"/>
</dbReference>
<dbReference type="GO" id="GO:0005829">
    <property type="term" value="C:cytosol"/>
    <property type="evidence" value="ECO:0007669"/>
    <property type="project" value="TreeGrafter"/>
</dbReference>
<dbReference type="GO" id="GO:0035870">
    <property type="term" value="F:dITP diphosphatase activity"/>
    <property type="evidence" value="ECO:0007669"/>
    <property type="project" value="RHEA"/>
</dbReference>
<dbReference type="GO" id="GO:0036220">
    <property type="term" value="F:ITP diphosphatase activity"/>
    <property type="evidence" value="ECO:0007669"/>
    <property type="project" value="UniProtKB-EC"/>
</dbReference>
<dbReference type="GO" id="GO:0046872">
    <property type="term" value="F:metal ion binding"/>
    <property type="evidence" value="ECO:0007669"/>
    <property type="project" value="UniProtKB-KW"/>
</dbReference>
<dbReference type="GO" id="GO:0000166">
    <property type="term" value="F:nucleotide binding"/>
    <property type="evidence" value="ECO:0007669"/>
    <property type="project" value="UniProtKB-KW"/>
</dbReference>
<dbReference type="GO" id="GO:0017111">
    <property type="term" value="F:ribonucleoside triphosphate phosphatase activity"/>
    <property type="evidence" value="ECO:0007669"/>
    <property type="project" value="InterPro"/>
</dbReference>
<dbReference type="GO" id="GO:0036222">
    <property type="term" value="F:XTP diphosphatase activity"/>
    <property type="evidence" value="ECO:0007669"/>
    <property type="project" value="RHEA"/>
</dbReference>
<dbReference type="GO" id="GO:0009117">
    <property type="term" value="P:nucleotide metabolic process"/>
    <property type="evidence" value="ECO:0007669"/>
    <property type="project" value="UniProtKB-KW"/>
</dbReference>
<dbReference type="GO" id="GO:0009146">
    <property type="term" value="P:purine nucleoside triphosphate catabolic process"/>
    <property type="evidence" value="ECO:0007669"/>
    <property type="project" value="UniProtKB-UniRule"/>
</dbReference>
<dbReference type="CDD" id="cd00515">
    <property type="entry name" value="HAM1"/>
    <property type="match status" value="1"/>
</dbReference>
<dbReference type="FunFam" id="3.90.950.10:FF:000001">
    <property type="entry name" value="dITP/XTP pyrophosphatase"/>
    <property type="match status" value="1"/>
</dbReference>
<dbReference type="Gene3D" id="3.90.950.10">
    <property type="match status" value="1"/>
</dbReference>
<dbReference type="HAMAP" id="MF_01405">
    <property type="entry name" value="Non_canon_purine_NTPase"/>
    <property type="match status" value="1"/>
</dbReference>
<dbReference type="InterPro" id="IPR020922">
    <property type="entry name" value="dITP/XTP_pyrophosphatase"/>
</dbReference>
<dbReference type="InterPro" id="IPR029001">
    <property type="entry name" value="ITPase-like_fam"/>
</dbReference>
<dbReference type="InterPro" id="IPR002637">
    <property type="entry name" value="RdgB/HAM1"/>
</dbReference>
<dbReference type="PANTHER" id="PTHR11067:SF9">
    <property type="entry name" value="INOSINE TRIPHOSPHATE PYROPHOSPHATASE"/>
    <property type="match status" value="1"/>
</dbReference>
<dbReference type="PANTHER" id="PTHR11067">
    <property type="entry name" value="INOSINE TRIPHOSPHATE PYROPHOSPHATASE/HAM1 PROTEIN"/>
    <property type="match status" value="1"/>
</dbReference>
<dbReference type="Pfam" id="PF01725">
    <property type="entry name" value="Ham1p_like"/>
    <property type="match status" value="1"/>
</dbReference>
<dbReference type="SUPFAM" id="SSF52972">
    <property type="entry name" value="ITPase-like"/>
    <property type="match status" value="1"/>
</dbReference>
<proteinExistence type="inferred from homology"/>